<gene>
    <name type="primary">pheA</name>
    <name type="ordered locus">MSMEG_6418</name>
    <name type="ordered locus">MSMEI_6250</name>
</gene>
<feature type="chain" id="PRO_0000382039" description="Prephenate dehydratase">
    <location>
        <begin position="1"/>
        <end position="310"/>
    </location>
</feature>
<feature type="domain" description="Prephenate dehydratase" evidence="2">
    <location>
        <begin position="3"/>
        <end position="190"/>
    </location>
</feature>
<feature type="domain" description="ACT" evidence="3">
    <location>
        <begin position="204"/>
        <end position="281"/>
    </location>
</feature>
<feature type="site" description="Essential for activity" evidence="1">
    <location>
        <position position="183"/>
    </location>
</feature>
<reference key="1">
    <citation type="submission" date="2006-10" db="EMBL/GenBank/DDBJ databases">
        <authorList>
            <person name="Fleischmann R.D."/>
            <person name="Dodson R.J."/>
            <person name="Haft D.H."/>
            <person name="Merkel J.S."/>
            <person name="Nelson W.C."/>
            <person name="Fraser C.M."/>
        </authorList>
    </citation>
    <scope>NUCLEOTIDE SEQUENCE [LARGE SCALE GENOMIC DNA]</scope>
    <source>
        <strain>ATCC 700084 / mc(2)155</strain>
    </source>
</reference>
<reference key="2">
    <citation type="journal article" date="2007" name="Genome Biol.">
        <title>Interrupted coding sequences in Mycobacterium smegmatis: authentic mutations or sequencing errors?</title>
        <authorList>
            <person name="Deshayes C."/>
            <person name="Perrodou E."/>
            <person name="Gallien S."/>
            <person name="Euphrasie D."/>
            <person name="Schaeffer C."/>
            <person name="Van-Dorsselaer A."/>
            <person name="Poch O."/>
            <person name="Lecompte O."/>
            <person name="Reyrat J.-M."/>
        </authorList>
    </citation>
    <scope>NUCLEOTIDE SEQUENCE [LARGE SCALE GENOMIC DNA]</scope>
    <source>
        <strain>ATCC 700084 / mc(2)155</strain>
    </source>
</reference>
<reference key="3">
    <citation type="journal article" date="2009" name="Genome Res.">
        <title>Ortho-proteogenomics: multiple proteomes investigation through orthology and a new MS-based protocol.</title>
        <authorList>
            <person name="Gallien S."/>
            <person name="Perrodou E."/>
            <person name="Carapito C."/>
            <person name="Deshayes C."/>
            <person name="Reyrat J.-M."/>
            <person name="Van Dorsselaer A."/>
            <person name="Poch O."/>
            <person name="Schaeffer C."/>
            <person name="Lecompte O."/>
        </authorList>
    </citation>
    <scope>NUCLEOTIDE SEQUENCE [LARGE SCALE GENOMIC DNA]</scope>
    <source>
        <strain>ATCC 700084 / mc(2)155</strain>
    </source>
</reference>
<sequence length="310" mass="32464">MPRIAYLGPEGTFTEAALLQMVAKGMVPGPAEDAGGFTPVRTDSTPGALSAVREGRADYACVPIENSIDGTVLPTLDSLAAGSPLQIYAELTLDVAFTIVVRPGHDGPVRTVAAFPVAAAQVRHWLAANLRDAEVVPAHSNAAAAHDVAEGRADAGVSTRLAAERCGLDIMAADVVDEPNARTRFVLVGLPGTPPPATGADRTAVVLRLVNEPGALVSAMTEFSIRDIDLTRIESRPTRTELGTYMFFLDCAGHIDDDPVAEALKALHRRCVDVRYLGSWPTESAAGAPPPRLDEATTWLEGLRAGSGGA</sequence>
<name>PHEA_MYCS2</name>
<keyword id="KW-0028">Amino-acid biosynthesis</keyword>
<keyword id="KW-0057">Aromatic amino acid biosynthesis</keyword>
<keyword id="KW-0456">Lyase</keyword>
<keyword id="KW-0584">Phenylalanine biosynthesis</keyword>
<keyword id="KW-1185">Reference proteome</keyword>
<dbReference type="EC" id="4.2.1.51"/>
<dbReference type="EMBL" id="CP000480">
    <property type="protein sequence ID" value="ABK72631.1"/>
    <property type="molecule type" value="Genomic_DNA"/>
</dbReference>
<dbReference type="EMBL" id="CP001663">
    <property type="protein sequence ID" value="AFP42676.1"/>
    <property type="molecule type" value="Genomic_DNA"/>
</dbReference>
<dbReference type="RefSeq" id="WP_003897827.1">
    <property type="nucleotide sequence ID" value="NZ_SIJM01000013.1"/>
</dbReference>
<dbReference type="RefSeq" id="YP_890631.1">
    <property type="nucleotide sequence ID" value="NC_008596.1"/>
</dbReference>
<dbReference type="SMR" id="A0R643"/>
<dbReference type="STRING" id="246196.MSMEG_6418"/>
<dbReference type="PaxDb" id="246196-MSMEI_6250"/>
<dbReference type="KEGG" id="msb:LJ00_31725"/>
<dbReference type="KEGG" id="msg:MSMEI_6250"/>
<dbReference type="KEGG" id="msm:MSMEG_6418"/>
<dbReference type="PATRIC" id="fig|246196.19.peg.6244"/>
<dbReference type="eggNOG" id="COG0077">
    <property type="taxonomic scope" value="Bacteria"/>
</dbReference>
<dbReference type="OrthoDB" id="9802281at2"/>
<dbReference type="UniPathway" id="UPA00121">
    <property type="reaction ID" value="UER00345"/>
</dbReference>
<dbReference type="Proteomes" id="UP000000757">
    <property type="component" value="Chromosome"/>
</dbReference>
<dbReference type="Proteomes" id="UP000006158">
    <property type="component" value="Chromosome"/>
</dbReference>
<dbReference type="GO" id="GO:0005737">
    <property type="term" value="C:cytoplasm"/>
    <property type="evidence" value="ECO:0007669"/>
    <property type="project" value="TreeGrafter"/>
</dbReference>
<dbReference type="GO" id="GO:0004664">
    <property type="term" value="F:prephenate dehydratase activity"/>
    <property type="evidence" value="ECO:0007669"/>
    <property type="project" value="UniProtKB-EC"/>
</dbReference>
<dbReference type="GO" id="GO:0042803">
    <property type="term" value="F:protein homodimerization activity"/>
    <property type="evidence" value="ECO:0000250"/>
    <property type="project" value="UniProtKB"/>
</dbReference>
<dbReference type="GO" id="GO:0009094">
    <property type="term" value="P:L-phenylalanine biosynthetic process"/>
    <property type="evidence" value="ECO:0007669"/>
    <property type="project" value="UniProtKB-UniPathway"/>
</dbReference>
<dbReference type="CDD" id="cd04905">
    <property type="entry name" value="ACT_CM-PDT"/>
    <property type="match status" value="1"/>
</dbReference>
<dbReference type="CDD" id="cd13632">
    <property type="entry name" value="PBP2_Aa-PDT_like"/>
    <property type="match status" value="1"/>
</dbReference>
<dbReference type="FunFam" id="3.30.70.260:FF:000012">
    <property type="entry name" value="Prephenate dehydratase"/>
    <property type="match status" value="1"/>
</dbReference>
<dbReference type="FunFam" id="3.40.190.10:FF:000064">
    <property type="entry name" value="Prephenate dehydratase"/>
    <property type="match status" value="1"/>
</dbReference>
<dbReference type="FunFam" id="3.40.190.10:FF:000146">
    <property type="entry name" value="Prephenate dehydratase"/>
    <property type="match status" value="1"/>
</dbReference>
<dbReference type="Gene3D" id="3.30.70.260">
    <property type="match status" value="1"/>
</dbReference>
<dbReference type="Gene3D" id="3.40.190.10">
    <property type="entry name" value="Periplasmic binding protein-like II"/>
    <property type="match status" value="2"/>
</dbReference>
<dbReference type="InterPro" id="IPR045865">
    <property type="entry name" value="ACT-like_dom_sf"/>
</dbReference>
<dbReference type="InterPro" id="IPR002912">
    <property type="entry name" value="ACT_dom"/>
</dbReference>
<dbReference type="InterPro" id="IPR008242">
    <property type="entry name" value="Chor_mutase/pphenate_deHydtase"/>
</dbReference>
<dbReference type="InterPro" id="IPR001086">
    <property type="entry name" value="Preph_deHydtase"/>
</dbReference>
<dbReference type="InterPro" id="IPR018528">
    <property type="entry name" value="Preph_deHydtase_CS"/>
</dbReference>
<dbReference type="NCBIfam" id="NF008865">
    <property type="entry name" value="PRK11898.1"/>
    <property type="match status" value="1"/>
</dbReference>
<dbReference type="PANTHER" id="PTHR21022">
    <property type="entry name" value="PREPHENATE DEHYDRATASE P PROTEIN"/>
    <property type="match status" value="1"/>
</dbReference>
<dbReference type="PANTHER" id="PTHR21022:SF19">
    <property type="entry name" value="PREPHENATE DEHYDRATASE-RELATED"/>
    <property type="match status" value="1"/>
</dbReference>
<dbReference type="Pfam" id="PF01842">
    <property type="entry name" value="ACT"/>
    <property type="match status" value="1"/>
</dbReference>
<dbReference type="Pfam" id="PF00800">
    <property type="entry name" value="PDT"/>
    <property type="match status" value="1"/>
</dbReference>
<dbReference type="PIRSF" id="PIRSF001500">
    <property type="entry name" value="Chor_mut_pdt_Ppr"/>
    <property type="match status" value="1"/>
</dbReference>
<dbReference type="SUPFAM" id="SSF55021">
    <property type="entry name" value="ACT-like"/>
    <property type="match status" value="1"/>
</dbReference>
<dbReference type="SUPFAM" id="SSF53850">
    <property type="entry name" value="Periplasmic binding protein-like II"/>
    <property type="match status" value="1"/>
</dbReference>
<dbReference type="PROSITE" id="PS51671">
    <property type="entry name" value="ACT"/>
    <property type="match status" value="1"/>
</dbReference>
<dbReference type="PROSITE" id="PS00858">
    <property type="entry name" value="PREPHENATE_DEHYDR_2"/>
    <property type="match status" value="1"/>
</dbReference>
<dbReference type="PROSITE" id="PS51171">
    <property type="entry name" value="PREPHENATE_DEHYDR_3"/>
    <property type="match status" value="1"/>
</dbReference>
<comment type="catalytic activity">
    <reaction>
        <text>prephenate + H(+) = 3-phenylpyruvate + CO2 + H2O</text>
        <dbReference type="Rhea" id="RHEA:21648"/>
        <dbReference type="ChEBI" id="CHEBI:15377"/>
        <dbReference type="ChEBI" id="CHEBI:15378"/>
        <dbReference type="ChEBI" id="CHEBI:16526"/>
        <dbReference type="ChEBI" id="CHEBI:18005"/>
        <dbReference type="ChEBI" id="CHEBI:29934"/>
        <dbReference type="EC" id="4.2.1.51"/>
    </reaction>
</comment>
<comment type="pathway">
    <text>Amino-acid biosynthesis; L-phenylalanine biosynthesis; phenylpyruvate from prephenate: step 1/1.</text>
</comment>
<comment type="subunit">
    <text evidence="1">Homodimer.</text>
</comment>
<protein>
    <recommendedName>
        <fullName>Prephenate dehydratase</fullName>
        <shortName>PDT</shortName>
        <ecNumber>4.2.1.51</ecNumber>
    </recommendedName>
</protein>
<evidence type="ECO:0000250" key="1"/>
<evidence type="ECO:0000255" key="2">
    <source>
        <dbReference type="PROSITE-ProRule" id="PRU00517"/>
    </source>
</evidence>
<evidence type="ECO:0000255" key="3">
    <source>
        <dbReference type="PROSITE-ProRule" id="PRU01007"/>
    </source>
</evidence>
<organism>
    <name type="scientific">Mycolicibacterium smegmatis (strain ATCC 700084 / mc(2)155)</name>
    <name type="common">Mycobacterium smegmatis</name>
    <dbReference type="NCBI Taxonomy" id="246196"/>
    <lineage>
        <taxon>Bacteria</taxon>
        <taxon>Bacillati</taxon>
        <taxon>Actinomycetota</taxon>
        <taxon>Actinomycetes</taxon>
        <taxon>Mycobacteriales</taxon>
        <taxon>Mycobacteriaceae</taxon>
        <taxon>Mycolicibacterium</taxon>
    </lineage>
</organism>
<proteinExistence type="inferred from homology"/>
<accession>A0R643</accession>
<accession>I7GFR7</accession>